<evidence type="ECO:0000255" key="1">
    <source>
        <dbReference type="HAMAP-Rule" id="MF_01371"/>
    </source>
</evidence>
<evidence type="ECO:0000305" key="2"/>
<dbReference type="EMBL" id="CP000903">
    <property type="protein sequence ID" value="ABY41392.1"/>
    <property type="molecule type" value="Genomic_DNA"/>
</dbReference>
<dbReference type="RefSeq" id="WP_001085231.1">
    <property type="nucleotide sequence ID" value="NZ_CAKMRX030000129.1"/>
</dbReference>
<dbReference type="SMR" id="A9VP95"/>
<dbReference type="GeneID" id="92887821"/>
<dbReference type="KEGG" id="bwe:BcerKBAB4_0123"/>
<dbReference type="eggNOG" id="COG1841">
    <property type="taxonomic scope" value="Bacteria"/>
</dbReference>
<dbReference type="HOGENOM" id="CLU_131047_2_1_9"/>
<dbReference type="Proteomes" id="UP000002154">
    <property type="component" value="Chromosome"/>
</dbReference>
<dbReference type="GO" id="GO:0022625">
    <property type="term" value="C:cytosolic large ribosomal subunit"/>
    <property type="evidence" value="ECO:0007669"/>
    <property type="project" value="TreeGrafter"/>
</dbReference>
<dbReference type="GO" id="GO:0003735">
    <property type="term" value="F:structural constituent of ribosome"/>
    <property type="evidence" value="ECO:0007669"/>
    <property type="project" value="InterPro"/>
</dbReference>
<dbReference type="GO" id="GO:0006412">
    <property type="term" value="P:translation"/>
    <property type="evidence" value="ECO:0007669"/>
    <property type="project" value="UniProtKB-UniRule"/>
</dbReference>
<dbReference type="CDD" id="cd01658">
    <property type="entry name" value="Ribosomal_L30"/>
    <property type="match status" value="1"/>
</dbReference>
<dbReference type="FunFam" id="3.30.1390.20:FF:000001">
    <property type="entry name" value="50S ribosomal protein L30"/>
    <property type="match status" value="1"/>
</dbReference>
<dbReference type="Gene3D" id="3.30.1390.20">
    <property type="entry name" value="Ribosomal protein L30, ferredoxin-like fold domain"/>
    <property type="match status" value="1"/>
</dbReference>
<dbReference type="HAMAP" id="MF_01371_B">
    <property type="entry name" value="Ribosomal_uL30_B"/>
    <property type="match status" value="1"/>
</dbReference>
<dbReference type="InterPro" id="IPR036919">
    <property type="entry name" value="Ribo_uL30_ferredoxin-like_sf"/>
</dbReference>
<dbReference type="InterPro" id="IPR005996">
    <property type="entry name" value="Ribosomal_uL30_bac-type"/>
</dbReference>
<dbReference type="InterPro" id="IPR018038">
    <property type="entry name" value="Ribosomal_uL30_CS"/>
</dbReference>
<dbReference type="InterPro" id="IPR016082">
    <property type="entry name" value="Ribosomal_uL30_ferredoxin-like"/>
</dbReference>
<dbReference type="NCBIfam" id="TIGR01308">
    <property type="entry name" value="rpmD_bact"/>
    <property type="match status" value="1"/>
</dbReference>
<dbReference type="PANTHER" id="PTHR15892:SF2">
    <property type="entry name" value="LARGE RIBOSOMAL SUBUNIT PROTEIN UL30M"/>
    <property type="match status" value="1"/>
</dbReference>
<dbReference type="PANTHER" id="PTHR15892">
    <property type="entry name" value="MITOCHONDRIAL RIBOSOMAL PROTEIN L30"/>
    <property type="match status" value="1"/>
</dbReference>
<dbReference type="Pfam" id="PF00327">
    <property type="entry name" value="Ribosomal_L30"/>
    <property type="match status" value="1"/>
</dbReference>
<dbReference type="PIRSF" id="PIRSF002211">
    <property type="entry name" value="Ribosomal_L30_bac-type"/>
    <property type="match status" value="1"/>
</dbReference>
<dbReference type="SUPFAM" id="SSF55129">
    <property type="entry name" value="Ribosomal protein L30p/L7e"/>
    <property type="match status" value="1"/>
</dbReference>
<dbReference type="PROSITE" id="PS00634">
    <property type="entry name" value="RIBOSOMAL_L30"/>
    <property type="match status" value="1"/>
</dbReference>
<organism>
    <name type="scientific">Bacillus mycoides (strain KBAB4)</name>
    <name type="common">Bacillus weihenstephanensis</name>
    <dbReference type="NCBI Taxonomy" id="315730"/>
    <lineage>
        <taxon>Bacteria</taxon>
        <taxon>Bacillati</taxon>
        <taxon>Bacillota</taxon>
        <taxon>Bacilli</taxon>
        <taxon>Bacillales</taxon>
        <taxon>Bacillaceae</taxon>
        <taxon>Bacillus</taxon>
        <taxon>Bacillus cereus group</taxon>
    </lineage>
</organism>
<name>RL30_BACMK</name>
<comment type="subunit">
    <text evidence="1">Part of the 50S ribosomal subunit.</text>
</comment>
<comment type="similarity">
    <text evidence="1">Belongs to the universal ribosomal protein uL30 family.</text>
</comment>
<sequence>MAKKLEITLTRSVIGRPQDQRATVEALGLKKLNSTVVKEETPAILGMINKVSHLITVKEA</sequence>
<feature type="chain" id="PRO_1000144651" description="Large ribosomal subunit protein uL30">
    <location>
        <begin position="1"/>
        <end position="60"/>
    </location>
</feature>
<gene>
    <name evidence="1" type="primary">rpmD</name>
    <name type="ordered locus">BcerKBAB4_0123</name>
</gene>
<accession>A9VP95</accession>
<protein>
    <recommendedName>
        <fullName evidence="1">Large ribosomal subunit protein uL30</fullName>
    </recommendedName>
    <alternativeName>
        <fullName evidence="2">50S ribosomal protein L30</fullName>
    </alternativeName>
</protein>
<reference key="1">
    <citation type="journal article" date="2008" name="Chem. Biol. Interact.">
        <title>Extending the Bacillus cereus group genomics to putative food-borne pathogens of different toxicity.</title>
        <authorList>
            <person name="Lapidus A."/>
            <person name="Goltsman E."/>
            <person name="Auger S."/>
            <person name="Galleron N."/>
            <person name="Segurens B."/>
            <person name="Dossat C."/>
            <person name="Land M.L."/>
            <person name="Broussolle V."/>
            <person name="Brillard J."/>
            <person name="Guinebretiere M.-H."/>
            <person name="Sanchis V."/>
            <person name="Nguen-the C."/>
            <person name="Lereclus D."/>
            <person name="Richardson P."/>
            <person name="Wincker P."/>
            <person name="Weissenbach J."/>
            <person name="Ehrlich S.D."/>
            <person name="Sorokin A."/>
        </authorList>
    </citation>
    <scope>NUCLEOTIDE SEQUENCE [LARGE SCALE GENOMIC DNA]</scope>
    <source>
        <strain>KBAB4</strain>
    </source>
</reference>
<proteinExistence type="inferred from homology"/>
<keyword id="KW-0687">Ribonucleoprotein</keyword>
<keyword id="KW-0689">Ribosomal protein</keyword>